<proteinExistence type="inferred from homology"/>
<gene>
    <name evidence="1" type="primary">leuA</name>
    <name type="ordered locus">SDY_0101</name>
</gene>
<keyword id="KW-0028">Amino-acid biosynthesis</keyword>
<keyword id="KW-0100">Branched-chain amino acid biosynthesis</keyword>
<keyword id="KW-0963">Cytoplasm</keyword>
<keyword id="KW-0432">Leucine biosynthesis</keyword>
<keyword id="KW-0464">Manganese</keyword>
<keyword id="KW-0479">Metal-binding</keyword>
<keyword id="KW-1185">Reference proteome</keyword>
<keyword id="KW-0808">Transferase</keyword>
<sequence>MSQQVIIFDTTLRDGEQALQASLSVKEKLQIALALERMGVDVMEVGFPVSSPGDFESVQTIARQVKNSRVCALARCVEKDIDVAAESLKVAEAFRIHTFIATSPMHIATKLRSTLDEVIERAIYMVKRARNYTDDVEFSCEDAGRTPIADLARVVEAAINAGATTINIPDTVGYTMPFEFAGIISGLYERVPNIDKAIISVHTHDDLGLAVGNSLAAVHAGARQVEGAMNGIGERAGNCSLEEVIMAIKVRKDILNVHTAINHQEIWRTSQLVSQICNMPIPANKAIVGSGAFAHSSGIHQDGVLKNRENYEIMTPESIGLNQIQLNLTSRSGRAAVKHRMDEMGYKESEYNLDNLYDAFLKLADKKGQVFDYDLEALAFIGKQQEEPEHFRLDYFSVQSSSNDIATAAVKLACGEEVKAEAANGNGPVDAVYQAINRITDYNVELVKYSLTAKGHGKDALGQVDIVANYNGRRFHGVGLATDIVESSAKAMVHVLNNIWRAAEVEKELQRKAQHNENNKETV</sequence>
<feature type="chain" id="PRO_1000149297" description="2-isopropylmalate synthase">
    <location>
        <begin position="1"/>
        <end position="523"/>
    </location>
</feature>
<feature type="domain" description="Pyruvate carboxyltransferase" evidence="1">
    <location>
        <begin position="5"/>
        <end position="267"/>
    </location>
</feature>
<feature type="region of interest" description="Regulatory domain" evidence="1">
    <location>
        <begin position="392"/>
        <end position="523"/>
    </location>
</feature>
<feature type="binding site" evidence="1">
    <location>
        <position position="14"/>
    </location>
    <ligand>
        <name>Mn(2+)</name>
        <dbReference type="ChEBI" id="CHEBI:29035"/>
    </ligand>
</feature>
<feature type="binding site" evidence="1">
    <location>
        <position position="202"/>
    </location>
    <ligand>
        <name>Mn(2+)</name>
        <dbReference type="ChEBI" id="CHEBI:29035"/>
    </ligand>
</feature>
<feature type="binding site" evidence="1">
    <location>
        <position position="204"/>
    </location>
    <ligand>
        <name>Mn(2+)</name>
        <dbReference type="ChEBI" id="CHEBI:29035"/>
    </ligand>
</feature>
<feature type="binding site" evidence="1">
    <location>
        <position position="238"/>
    </location>
    <ligand>
        <name>Mn(2+)</name>
        <dbReference type="ChEBI" id="CHEBI:29035"/>
    </ligand>
</feature>
<organism>
    <name type="scientific">Shigella dysenteriae serotype 1 (strain Sd197)</name>
    <dbReference type="NCBI Taxonomy" id="300267"/>
    <lineage>
        <taxon>Bacteria</taxon>
        <taxon>Pseudomonadati</taxon>
        <taxon>Pseudomonadota</taxon>
        <taxon>Gammaproteobacteria</taxon>
        <taxon>Enterobacterales</taxon>
        <taxon>Enterobacteriaceae</taxon>
        <taxon>Shigella</taxon>
    </lineage>
</organism>
<comment type="function">
    <text evidence="1">Catalyzes the condensation of the acetyl group of acetyl-CoA with 3-methyl-2-oxobutanoate (2-ketoisovalerate) to form 3-carboxy-3-hydroxy-4-methylpentanoate (2-isopropylmalate).</text>
</comment>
<comment type="catalytic activity">
    <reaction evidence="1">
        <text>3-methyl-2-oxobutanoate + acetyl-CoA + H2O = (2S)-2-isopropylmalate + CoA + H(+)</text>
        <dbReference type="Rhea" id="RHEA:21524"/>
        <dbReference type="ChEBI" id="CHEBI:1178"/>
        <dbReference type="ChEBI" id="CHEBI:11851"/>
        <dbReference type="ChEBI" id="CHEBI:15377"/>
        <dbReference type="ChEBI" id="CHEBI:15378"/>
        <dbReference type="ChEBI" id="CHEBI:57287"/>
        <dbReference type="ChEBI" id="CHEBI:57288"/>
        <dbReference type="EC" id="2.3.3.13"/>
    </reaction>
</comment>
<comment type="cofactor">
    <cofactor evidence="1">
        <name>Mn(2+)</name>
        <dbReference type="ChEBI" id="CHEBI:29035"/>
    </cofactor>
</comment>
<comment type="pathway">
    <text evidence="1">Amino-acid biosynthesis; L-leucine biosynthesis; L-leucine from 3-methyl-2-oxobutanoate: step 1/4.</text>
</comment>
<comment type="subunit">
    <text evidence="1">Homodimer.</text>
</comment>
<comment type="subcellular location">
    <subcellularLocation>
        <location evidence="1">Cytoplasm</location>
    </subcellularLocation>
</comment>
<comment type="similarity">
    <text evidence="1">Belongs to the alpha-IPM synthase/homocitrate synthase family. LeuA type 1 subfamily.</text>
</comment>
<protein>
    <recommendedName>
        <fullName evidence="1">2-isopropylmalate synthase</fullName>
        <ecNumber evidence="1">2.3.3.13</ecNumber>
    </recommendedName>
    <alternativeName>
        <fullName evidence="1">Alpha-IPM synthase</fullName>
    </alternativeName>
    <alternativeName>
        <fullName evidence="1">Alpha-isopropylmalate synthase</fullName>
    </alternativeName>
</protein>
<dbReference type="EC" id="2.3.3.13" evidence="1"/>
<dbReference type="EMBL" id="CP000034">
    <property type="protein sequence ID" value="ABB60337.1"/>
    <property type="molecule type" value="Genomic_DNA"/>
</dbReference>
<dbReference type="RefSeq" id="WP_000082853.1">
    <property type="nucleotide sequence ID" value="NC_007606.1"/>
</dbReference>
<dbReference type="RefSeq" id="YP_401826.1">
    <property type="nucleotide sequence ID" value="NC_007606.1"/>
</dbReference>
<dbReference type="SMR" id="Q32K20"/>
<dbReference type="STRING" id="300267.SDY_0101"/>
<dbReference type="EnsemblBacteria" id="ABB60337">
    <property type="protein sequence ID" value="ABB60337"/>
    <property type="gene ID" value="SDY_0101"/>
</dbReference>
<dbReference type="KEGG" id="sdy:SDY_0101"/>
<dbReference type="PATRIC" id="fig|300267.13.peg.120"/>
<dbReference type="HOGENOM" id="CLU_022158_0_1_6"/>
<dbReference type="UniPathway" id="UPA00048">
    <property type="reaction ID" value="UER00070"/>
</dbReference>
<dbReference type="Proteomes" id="UP000002716">
    <property type="component" value="Chromosome"/>
</dbReference>
<dbReference type="GO" id="GO:0005829">
    <property type="term" value="C:cytosol"/>
    <property type="evidence" value="ECO:0007669"/>
    <property type="project" value="TreeGrafter"/>
</dbReference>
<dbReference type="GO" id="GO:0003852">
    <property type="term" value="F:2-isopropylmalate synthase activity"/>
    <property type="evidence" value="ECO:0007669"/>
    <property type="project" value="UniProtKB-UniRule"/>
</dbReference>
<dbReference type="GO" id="GO:0003985">
    <property type="term" value="F:acetyl-CoA C-acetyltransferase activity"/>
    <property type="evidence" value="ECO:0007669"/>
    <property type="project" value="UniProtKB-UniRule"/>
</dbReference>
<dbReference type="GO" id="GO:0030145">
    <property type="term" value="F:manganese ion binding"/>
    <property type="evidence" value="ECO:0007669"/>
    <property type="project" value="UniProtKB-UniRule"/>
</dbReference>
<dbReference type="GO" id="GO:0009098">
    <property type="term" value="P:L-leucine biosynthetic process"/>
    <property type="evidence" value="ECO:0007669"/>
    <property type="project" value="UniProtKB-UniRule"/>
</dbReference>
<dbReference type="CDD" id="cd07940">
    <property type="entry name" value="DRE_TIM_IPMS"/>
    <property type="match status" value="1"/>
</dbReference>
<dbReference type="FunFam" id="1.10.238.260:FF:000001">
    <property type="entry name" value="2-isopropylmalate synthase"/>
    <property type="match status" value="1"/>
</dbReference>
<dbReference type="FunFam" id="3.20.20.70:FF:000010">
    <property type="entry name" value="2-isopropylmalate synthase"/>
    <property type="match status" value="1"/>
</dbReference>
<dbReference type="FunFam" id="3.30.160.270:FF:000001">
    <property type="entry name" value="2-isopropylmalate synthase"/>
    <property type="match status" value="1"/>
</dbReference>
<dbReference type="Gene3D" id="1.10.238.260">
    <property type="match status" value="1"/>
</dbReference>
<dbReference type="Gene3D" id="3.30.160.270">
    <property type="match status" value="1"/>
</dbReference>
<dbReference type="Gene3D" id="3.20.20.70">
    <property type="entry name" value="Aldolase class I"/>
    <property type="match status" value="1"/>
</dbReference>
<dbReference type="HAMAP" id="MF_01025">
    <property type="entry name" value="LeuA_type1"/>
    <property type="match status" value="1"/>
</dbReference>
<dbReference type="InterPro" id="IPR050073">
    <property type="entry name" value="2-IPM_HCS-like"/>
</dbReference>
<dbReference type="InterPro" id="IPR013709">
    <property type="entry name" value="2-isopropylmalate_synth_dimer"/>
</dbReference>
<dbReference type="InterPro" id="IPR002034">
    <property type="entry name" value="AIPM/Hcit_synth_CS"/>
</dbReference>
<dbReference type="InterPro" id="IPR013785">
    <property type="entry name" value="Aldolase_TIM"/>
</dbReference>
<dbReference type="InterPro" id="IPR054691">
    <property type="entry name" value="LeuA/HCS_post-cat"/>
</dbReference>
<dbReference type="InterPro" id="IPR036230">
    <property type="entry name" value="LeuA_allosteric_dom_sf"/>
</dbReference>
<dbReference type="InterPro" id="IPR005671">
    <property type="entry name" value="LeuA_bact_synth"/>
</dbReference>
<dbReference type="InterPro" id="IPR000891">
    <property type="entry name" value="PYR_CT"/>
</dbReference>
<dbReference type="NCBIfam" id="TIGR00973">
    <property type="entry name" value="leuA_bact"/>
    <property type="match status" value="1"/>
</dbReference>
<dbReference type="NCBIfam" id="NF002084">
    <property type="entry name" value="PRK00915.1-1"/>
    <property type="match status" value="1"/>
</dbReference>
<dbReference type="NCBIfam" id="NF002086">
    <property type="entry name" value="PRK00915.1-3"/>
    <property type="match status" value="1"/>
</dbReference>
<dbReference type="PANTHER" id="PTHR10277:SF9">
    <property type="entry name" value="2-ISOPROPYLMALATE SYNTHASE 1, CHLOROPLASTIC-RELATED"/>
    <property type="match status" value="1"/>
</dbReference>
<dbReference type="PANTHER" id="PTHR10277">
    <property type="entry name" value="HOMOCITRATE SYNTHASE-RELATED"/>
    <property type="match status" value="1"/>
</dbReference>
<dbReference type="Pfam" id="PF22617">
    <property type="entry name" value="HCS_D2"/>
    <property type="match status" value="1"/>
</dbReference>
<dbReference type="Pfam" id="PF00682">
    <property type="entry name" value="HMGL-like"/>
    <property type="match status" value="1"/>
</dbReference>
<dbReference type="Pfam" id="PF08502">
    <property type="entry name" value="LeuA_dimer"/>
    <property type="match status" value="1"/>
</dbReference>
<dbReference type="SMART" id="SM00917">
    <property type="entry name" value="LeuA_dimer"/>
    <property type="match status" value="1"/>
</dbReference>
<dbReference type="SUPFAM" id="SSF110921">
    <property type="entry name" value="2-isopropylmalate synthase LeuA, allosteric (dimerisation) domain"/>
    <property type="match status" value="1"/>
</dbReference>
<dbReference type="SUPFAM" id="SSF51569">
    <property type="entry name" value="Aldolase"/>
    <property type="match status" value="1"/>
</dbReference>
<dbReference type="PROSITE" id="PS00815">
    <property type="entry name" value="AIPM_HOMOCIT_SYNTH_1"/>
    <property type="match status" value="1"/>
</dbReference>
<dbReference type="PROSITE" id="PS00816">
    <property type="entry name" value="AIPM_HOMOCIT_SYNTH_2"/>
    <property type="match status" value="1"/>
</dbReference>
<dbReference type="PROSITE" id="PS50991">
    <property type="entry name" value="PYR_CT"/>
    <property type="match status" value="1"/>
</dbReference>
<accession>Q32K20</accession>
<evidence type="ECO:0000255" key="1">
    <source>
        <dbReference type="HAMAP-Rule" id="MF_01025"/>
    </source>
</evidence>
<name>LEU1_SHIDS</name>
<reference key="1">
    <citation type="journal article" date="2005" name="Nucleic Acids Res.">
        <title>Genome dynamics and diversity of Shigella species, the etiologic agents of bacillary dysentery.</title>
        <authorList>
            <person name="Yang F."/>
            <person name="Yang J."/>
            <person name="Zhang X."/>
            <person name="Chen L."/>
            <person name="Jiang Y."/>
            <person name="Yan Y."/>
            <person name="Tang X."/>
            <person name="Wang J."/>
            <person name="Xiong Z."/>
            <person name="Dong J."/>
            <person name="Xue Y."/>
            <person name="Zhu Y."/>
            <person name="Xu X."/>
            <person name="Sun L."/>
            <person name="Chen S."/>
            <person name="Nie H."/>
            <person name="Peng J."/>
            <person name="Xu J."/>
            <person name="Wang Y."/>
            <person name="Yuan Z."/>
            <person name="Wen Y."/>
            <person name="Yao Z."/>
            <person name="Shen Y."/>
            <person name="Qiang B."/>
            <person name="Hou Y."/>
            <person name="Yu J."/>
            <person name="Jin Q."/>
        </authorList>
    </citation>
    <scope>NUCLEOTIDE SEQUENCE [LARGE SCALE GENOMIC DNA]</scope>
    <source>
        <strain>Sd197</strain>
    </source>
</reference>